<organism>
    <name type="scientific">Acanthophis antarcticus</name>
    <name type="common">Common death adder</name>
    <dbReference type="NCBI Taxonomy" id="8605"/>
    <lineage>
        <taxon>Eukaryota</taxon>
        <taxon>Metazoa</taxon>
        <taxon>Chordata</taxon>
        <taxon>Craniata</taxon>
        <taxon>Vertebrata</taxon>
        <taxon>Euteleostomi</taxon>
        <taxon>Lepidosauria</taxon>
        <taxon>Squamata</taxon>
        <taxon>Bifurcata</taxon>
        <taxon>Unidentata</taxon>
        <taxon>Episquamata</taxon>
        <taxon>Toxicofera</taxon>
        <taxon>Serpentes</taxon>
        <taxon>Colubroidea</taxon>
        <taxon>Elapidae</taxon>
        <taxon>Hydrophiinae</taxon>
        <taxon>Acanthophis</taxon>
    </lineage>
</organism>
<feature type="chain" id="PRO_0000395308" description="Phospholipase A2 homolog P-elapitoxin-Aa1a beta chain">
    <location>
        <begin position="1"/>
        <end position="31" status="greater than"/>
    </location>
</feature>
<feature type="disulfide bond" evidence="1">
    <location>
        <begin position="11"/>
        <end status="unknown"/>
    </location>
</feature>
<feature type="disulfide bond" evidence="1">
    <location>
        <begin position="27"/>
        <end status="unknown"/>
    </location>
</feature>
<feature type="disulfide bond" evidence="1">
    <location>
        <begin position="29"/>
        <end status="unknown"/>
    </location>
</feature>
<feature type="non-terminal residue" evidence="4">
    <location>
        <position position="31"/>
    </location>
</feature>
<keyword id="KW-0903">Direct protein sequencing</keyword>
<keyword id="KW-1015">Disulfide bond</keyword>
<keyword id="KW-0528">Neurotoxin</keyword>
<keyword id="KW-0638">Presynaptic neurotoxin</keyword>
<keyword id="KW-0964">Secreted</keyword>
<keyword id="KW-0800">Toxin</keyword>
<evidence type="ECO:0000250" key="1">
    <source>
        <dbReference type="UniProtKB" id="P00608"/>
    </source>
</evidence>
<evidence type="ECO:0000255" key="2"/>
<evidence type="ECO:0000269" key="3">
    <source>
    </source>
</evidence>
<evidence type="ECO:0000303" key="4">
    <source>
    </source>
</evidence>
<evidence type="ECO:0000305" key="5"/>
<comment type="function">
    <text evidence="3">Heterotrimer: Snake venom phospholipase A2 (PLA2) that has presynaptic neurotoxicity. Inhibits nerve-evoked twitch contractions but not responses to cholinergic agonists acetylcholine and carbachol and to depolarizing agonist KCl. Causes a fade in tetanic contractions. Displays a triphasic mode of action with depression, enhancement and blockade of neurotransmission. Does not display myotoxic activity such as changes in baseline muscle tension or inhibition of directly stimulated muscle twitches. All subunits are necessary for maximum toxicity.</text>
</comment>
<comment type="function">
    <text evidence="3">Monomer: The beta chain has no enzymatic activity and is not toxic by itself.</text>
</comment>
<comment type="subunit">
    <text evidence="3">Heterotrimer of alpha, beta and gamma chains, each related to PLA2.</text>
</comment>
<comment type="subcellular location">
    <subcellularLocation>
        <location evidence="3">Secreted</location>
    </subcellularLocation>
</comment>
<comment type="tissue specificity">
    <text evidence="3">Expressed by the venom gland.</text>
</comment>
<comment type="mass spectrometry"/>
<comment type="miscellaneous">
    <text>Preincubation of P-elapitoxin-Aa1a with monovalent antivenom or suramin prevents or delays toxicity, respectively. Antivenom fails to reverse neurotoxicity when applied at point of 90% neuromuscular blockade. Treatment of P-elapitoxin-Aa1a with 4-bromophenacyl bromide drastically reduces enzymatic activity and toxicity, presumably by alkylating a His residue at the active site.</text>
</comment>
<comment type="similarity">
    <text evidence="2">Belongs to the phospholipase A2 family. Group I subfamily.</text>
</comment>
<dbReference type="SMR" id="P86524"/>
<dbReference type="GO" id="GO:0005576">
    <property type="term" value="C:extracellular region"/>
    <property type="evidence" value="ECO:0007669"/>
    <property type="project" value="UniProtKB-SubCell"/>
</dbReference>
<dbReference type="GO" id="GO:0005509">
    <property type="term" value="F:calcium ion binding"/>
    <property type="evidence" value="ECO:0007669"/>
    <property type="project" value="InterPro"/>
</dbReference>
<dbReference type="GO" id="GO:0004623">
    <property type="term" value="F:phospholipase A2 activity"/>
    <property type="evidence" value="ECO:0007669"/>
    <property type="project" value="InterPro"/>
</dbReference>
<dbReference type="GO" id="GO:0090729">
    <property type="term" value="F:toxin activity"/>
    <property type="evidence" value="ECO:0007669"/>
    <property type="project" value="UniProtKB-KW"/>
</dbReference>
<dbReference type="GO" id="GO:0050482">
    <property type="term" value="P:arachidonate secretion"/>
    <property type="evidence" value="ECO:0007669"/>
    <property type="project" value="InterPro"/>
</dbReference>
<dbReference type="GO" id="GO:0016042">
    <property type="term" value="P:lipid catabolic process"/>
    <property type="evidence" value="ECO:0007669"/>
    <property type="project" value="InterPro"/>
</dbReference>
<dbReference type="GO" id="GO:0006644">
    <property type="term" value="P:phospholipid metabolic process"/>
    <property type="evidence" value="ECO:0007669"/>
    <property type="project" value="InterPro"/>
</dbReference>
<dbReference type="Gene3D" id="1.20.90.10">
    <property type="entry name" value="Phospholipase A2 domain"/>
    <property type="match status" value="1"/>
</dbReference>
<dbReference type="InterPro" id="IPR001211">
    <property type="entry name" value="PLipase_A2"/>
</dbReference>
<dbReference type="InterPro" id="IPR036444">
    <property type="entry name" value="PLipase_A2_dom_sf"/>
</dbReference>
<dbReference type="PRINTS" id="PR00389">
    <property type="entry name" value="PHPHLIPASEA2"/>
</dbReference>
<dbReference type="SUPFAM" id="SSF48619">
    <property type="entry name" value="Phospholipase A2, PLA2"/>
    <property type="match status" value="1"/>
</dbReference>
<proteinExistence type="evidence at protein level"/>
<sequence>DLFQFGKMIECANKGSRPSLDYMNYGCYCGK</sequence>
<accession>P86524</accession>
<reference evidence="5" key="1">
    <citation type="journal article" date="2010" name="Biochem. Pharmacol.">
        <title>Characterisation of the heterotrimeric presynaptic phospholipase A(2) neurotoxin complex from the venom of the common death adder (Acanthophis antarcticus).</title>
        <authorList>
            <person name="Blacklow B."/>
            <person name="Escoubas P."/>
            <person name="Nicholson G.M."/>
        </authorList>
    </citation>
    <scope>PROTEIN SEQUENCE</scope>
    <scope>FUNCTION</scope>
    <scope>SUBUNIT</scope>
    <scope>SUBCELLULAR LOCATION</scope>
    <scope>TISSUE SPECIFICITY</scope>
    <scope>MASS SPECTROMETRY</scope>
    <source>
        <strain evidence="3">New South Wales</strain>
        <tissue evidence="3">Venom</tissue>
    </source>
</reference>
<name>PA2HB_ACAAN</name>
<protein>
    <recommendedName>
        <fullName>Phospholipase A2 homolog P-elapitoxin-Aa1a beta chain</fullName>
        <shortName evidence="4">P-EPTX-Aa1a beta chain</shortName>
        <shortName>svPLA2 homolog</shortName>
    </recommendedName>
</protein>